<feature type="signal peptide" evidence="2">
    <location>
        <begin position="1"/>
        <end position="19"/>
    </location>
</feature>
<feature type="chain" id="PRO_0000042661" description="Transforming growth factor beta activator LRRC33" evidence="2">
    <location>
        <begin position="20"/>
        <end position="693"/>
    </location>
</feature>
<feature type="topological domain" description="Extracellular" evidence="10">
    <location>
        <begin position="20"/>
        <end position="651"/>
    </location>
</feature>
<feature type="transmembrane region" description="Helical" evidence="2">
    <location>
        <begin position="652"/>
        <end position="672"/>
    </location>
</feature>
<feature type="topological domain" description="Cytoplasmic" evidence="10">
    <location>
        <begin position="673"/>
        <end position="693"/>
    </location>
</feature>
<feature type="domain" description="LRRNT" evidence="2">
    <location>
        <begin position="29"/>
        <end position="56"/>
    </location>
</feature>
<feature type="repeat" description="LRR 1" evidence="2">
    <location>
        <begin position="58"/>
        <end position="79"/>
    </location>
</feature>
<feature type="repeat" description="LRR 2" evidence="2">
    <location>
        <begin position="82"/>
        <end position="103"/>
    </location>
</feature>
<feature type="repeat" description="LRR 3" evidence="2">
    <location>
        <begin position="106"/>
        <end position="127"/>
    </location>
</feature>
<feature type="repeat" description="LRR 4" evidence="2">
    <location>
        <begin position="133"/>
        <end position="155"/>
    </location>
</feature>
<feature type="repeat" description="LRR 5" evidence="2">
    <location>
        <begin position="158"/>
        <end position="179"/>
    </location>
</feature>
<feature type="repeat" description="LRR 6" evidence="2">
    <location>
        <begin position="182"/>
        <end position="203"/>
    </location>
</feature>
<feature type="repeat" description="LRR 7" evidence="2">
    <location>
        <begin position="206"/>
        <end position="227"/>
    </location>
</feature>
<feature type="repeat" description="LRR 8" evidence="2">
    <location>
        <begin position="228"/>
        <end position="239"/>
    </location>
</feature>
<feature type="repeat" description="LRR 9" evidence="2">
    <location>
        <begin position="251"/>
        <end position="272"/>
    </location>
</feature>
<feature type="repeat" description="LRR 10" evidence="2">
    <location>
        <begin position="273"/>
        <end position="294"/>
    </location>
</feature>
<feature type="repeat" description="LRR 11" evidence="2">
    <location>
        <begin position="329"/>
        <end position="350"/>
    </location>
</feature>
<feature type="repeat" description="LRR 12" evidence="2">
    <location>
        <begin position="353"/>
        <end position="374"/>
    </location>
</feature>
<feature type="repeat" description="LRR 13" evidence="2">
    <location>
        <begin position="377"/>
        <end position="398"/>
    </location>
</feature>
<feature type="repeat" description="LRR 14" evidence="2">
    <location>
        <begin position="403"/>
        <end position="424"/>
    </location>
</feature>
<feature type="repeat" description="LRR 15" evidence="2">
    <location>
        <begin position="427"/>
        <end position="448"/>
    </location>
</feature>
<feature type="repeat" description="LRR 16" evidence="2">
    <location>
        <begin position="463"/>
        <end position="484"/>
    </location>
</feature>
<feature type="repeat" description="LRR 17" evidence="2">
    <location>
        <begin position="486"/>
        <end position="507"/>
    </location>
</feature>
<feature type="repeat" description="LRR 18" evidence="2">
    <location>
        <begin position="512"/>
        <end position="533"/>
    </location>
</feature>
<feature type="repeat" description="LRR 19" evidence="2">
    <location>
        <begin position="537"/>
        <end position="558"/>
    </location>
</feature>
<feature type="repeat" description="LRR 20" evidence="2">
    <location>
        <begin position="559"/>
        <end position="580"/>
    </location>
</feature>
<feature type="repeat" description="LRR 21" evidence="2">
    <location>
        <begin position="585"/>
        <end position="605"/>
    </location>
</feature>
<feature type="domain" description="LRRCT" evidence="2">
    <location>
        <begin position="606"/>
        <end position="644"/>
    </location>
</feature>
<feature type="glycosylation site" description="N-linked (GlcNAc...) asparagine" evidence="2">
    <location>
        <position position="74"/>
    </location>
</feature>
<feature type="glycosylation site" description="N-linked (GlcNAc...) asparagine" evidence="2">
    <location>
        <position position="85"/>
    </location>
</feature>
<feature type="glycosylation site" description="N-linked (GlcNAc...) asparagine" evidence="2">
    <location>
        <position position="155"/>
    </location>
</feature>
<feature type="glycosylation site" description="N-linked (GlcNAc...) asparagine" evidence="2">
    <location>
        <position position="232"/>
    </location>
</feature>
<feature type="glycosylation site" description="N-linked (GlcNAc...) asparagine" evidence="2">
    <location>
        <position position="292"/>
    </location>
</feature>
<feature type="glycosylation site" description="N-linked (GlcNAc...) asparagine" evidence="2">
    <location>
        <position position="309"/>
    </location>
</feature>
<feature type="glycosylation site" description="N-linked (GlcNAc...) asparagine" evidence="2">
    <location>
        <position position="312"/>
    </location>
</feature>
<feature type="glycosylation site" description="N-linked (GlcNAc...) asparagine" evidence="2">
    <location>
        <position position="408"/>
    </location>
</feature>
<feature type="glycosylation site" description="N-linked (GlcNAc...) asparagine" evidence="2">
    <location>
        <position position="424"/>
    </location>
</feature>
<feature type="glycosylation site" description="N-linked (GlcNAc...) asparagine" evidence="2">
    <location>
        <position position="500"/>
    </location>
</feature>
<feature type="glycosylation site" description="N-linked (GlcNAc...) asparagine" evidence="2">
    <location>
        <position position="623"/>
    </location>
</feature>
<feature type="disulfide bond" description="Interchain (with C-? in TGFB1); in linked form" evidence="6">
    <location>
        <position position="219"/>
    </location>
</feature>
<feature type="disulfide bond" description="Interchain (with C-? in TGFB1); in linked form" evidence="6">
    <location>
        <position position="363"/>
    </location>
</feature>
<feature type="splice variant" id="VSP_016019" description="In isoform 2." evidence="7">
    <original>MEFPPLWLCLGFHFLIVEWRSGPGTATAASQGGCKV</original>
    <variation>MRPAEPPGPAGA</variation>
    <location>
        <begin position="1"/>
        <end position="36"/>
    </location>
</feature>
<feature type="splice variant" id="VSP_016020" description="In isoform 3." evidence="7">
    <original>M</original>
    <variation>MQEPLETGSIESSGTGNVVVSHQRAVPEM</variation>
    <location>
        <position position="1"/>
    </location>
</feature>
<feature type="mutagenesis site" description="Abolishes formation of disulfide bonds and ability to interact with TGFB1; when associated with A-363." evidence="6">
    <original>C</original>
    <variation>A</variation>
    <location>
        <position position="219"/>
    </location>
</feature>
<feature type="mutagenesis site" description="Abolishes formation of disulfide bonds and ability to interact with TGFB1; when associated with A-219." evidence="6">
    <original>C</original>
    <variation>A</variation>
    <location>
        <position position="363"/>
    </location>
</feature>
<feature type="sequence conflict" description="In Ref. 2; BAC25907." evidence="10" ref="2">
    <original>D</original>
    <variation>E</variation>
    <location>
        <position position="520"/>
    </location>
</feature>
<feature type="sequence conflict" description="In Ref. 2; BAC25907." evidence="10" ref="2">
    <original>R</original>
    <variation>H</variation>
    <location>
        <position position="566"/>
    </location>
</feature>
<organism>
    <name type="scientific">Mus musculus</name>
    <name type="common">Mouse</name>
    <dbReference type="NCBI Taxonomy" id="10090"/>
    <lineage>
        <taxon>Eukaryota</taxon>
        <taxon>Metazoa</taxon>
        <taxon>Chordata</taxon>
        <taxon>Craniata</taxon>
        <taxon>Vertebrata</taxon>
        <taxon>Euteleostomi</taxon>
        <taxon>Mammalia</taxon>
        <taxon>Eutheria</taxon>
        <taxon>Euarchontoglires</taxon>
        <taxon>Glires</taxon>
        <taxon>Rodentia</taxon>
        <taxon>Myomorpha</taxon>
        <taxon>Muroidea</taxon>
        <taxon>Muridae</taxon>
        <taxon>Murinae</taxon>
        <taxon>Mus</taxon>
        <taxon>Mus</taxon>
    </lineage>
</organism>
<sequence length="693" mass="77140">MEFPPLWLCLGFHFLIVEWRSGPGTATAASQGGCKVVDGVADCRGLNLASVPSSLPPHSRMLILDANPLKDLWNHSLQAYPRLENLSLHSCHLDRISHYAFREQGHLRNLVLADNRLSENYKESAAALHTLLGLRRLDLSGNSLTEDMAALMLQNLSSLEVVSLARNTLMRLDDSIFEGLEHLVELDLQRNYIFEIEGGAFDGLTELRRLNLAYNNLPCIVDFSLTQLRFLNVSYNILEWFLAAREEVAFELEILDLSHNQLLFFPLLPQCGKLHTLLLQDNNMGFYRELYNTSSPQEMVAQFLLVDGNVTNITTVNLWEEFSSSDLSALRFLDMSQNQFRHLPDGFLKKTPSLSHLNLNQNCLKMLHIREHEPPGALTELDLSHNQLAELHLAPGLTGSLRNLRVFNLSSNQLLGVPTGLFDNASSITTIDMSHNQISLCPQMVPVDWEGPPSCVDFRNMGSLRSLSLDGCGLKALQDCPFQGTSLTHLDLSSNWGVLNGSISPLWAVAPTLQVLSLRDVGLGSGAAEMDFSAFGNLRALDLSGNSLTSFPKFKGSLALRTLDLRRNSLTALPQRVVSEQPLRGLQTIYLSQNPYDCCGVEGWGALQQHFKTVADLSMVTCNLSSKIVRVVELPEGLPQGCKWEQVDTGLFYLVLILPSCLTLLVACTVVFLTFKKPLLQVIKSRCHWSSIY</sequence>
<protein>
    <recommendedName>
        <fullName evidence="10">Transforming growth factor beta activator LRRC33</fullName>
    </recommendedName>
    <alternativeName>
        <fullName evidence="10">Leucine-rich repeat-containing protein 33</fullName>
    </alternativeName>
    <alternativeName>
        <fullName evidence="8">Negative regulator of reactive oxygen species</fullName>
    </alternativeName>
</protein>
<name>LRC33_MOUSE</name>
<reference key="1">
    <citation type="journal article" date="2005" name="Science">
        <title>The transcriptional landscape of the mammalian genome.</title>
        <authorList>
            <person name="Carninci P."/>
            <person name="Kasukawa T."/>
            <person name="Katayama S."/>
            <person name="Gough J."/>
            <person name="Frith M.C."/>
            <person name="Maeda N."/>
            <person name="Oyama R."/>
            <person name="Ravasi T."/>
            <person name="Lenhard B."/>
            <person name="Wells C."/>
            <person name="Kodzius R."/>
            <person name="Shimokawa K."/>
            <person name="Bajic V.B."/>
            <person name="Brenner S.E."/>
            <person name="Batalov S."/>
            <person name="Forrest A.R."/>
            <person name="Zavolan M."/>
            <person name="Davis M.J."/>
            <person name="Wilming L.G."/>
            <person name="Aidinis V."/>
            <person name="Allen J.E."/>
            <person name="Ambesi-Impiombato A."/>
            <person name="Apweiler R."/>
            <person name="Aturaliya R.N."/>
            <person name="Bailey T.L."/>
            <person name="Bansal M."/>
            <person name="Baxter L."/>
            <person name="Beisel K.W."/>
            <person name="Bersano T."/>
            <person name="Bono H."/>
            <person name="Chalk A.M."/>
            <person name="Chiu K.P."/>
            <person name="Choudhary V."/>
            <person name="Christoffels A."/>
            <person name="Clutterbuck D.R."/>
            <person name="Crowe M.L."/>
            <person name="Dalla E."/>
            <person name="Dalrymple B.P."/>
            <person name="de Bono B."/>
            <person name="Della Gatta G."/>
            <person name="di Bernardo D."/>
            <person name="Down T."/>
            <person name="Engstrom P."/>
            <person name="Fagiolini M."/>
            <person name="Faulkner G."/>
            <person name="Fletcher C.F."/>
            <person name="Fukushima T."/>
            <person name="Furuno M."/>
            <person name="Futaki S."/>
            <person name="Gariboldi M."/>
            <person name="Georgii-Hemming P."/>
            <person name="Gingeras T.R."/>
            <person name="Gojobori T."/>
            <person name="Green R.E."/>
            <person name="Gustincich S."/>
            <person name="Harbers M."/>
            <person name="Hayashi Y."/>
            <person name="Hensch T.K."/>
            <person name="Hirokawa N."/>
            <person name="Hill D."/>
            <person name="Huminiecki L."/>
            <person name="Iacono M."/>
            <person name="Ikeo K."/>
            <person name="Iwama A."/>
            <person name="Ishikawa T."/>
            <person name="Jakt M."/>
            <person name="Kanapin A."/>
            <person name="Katoh M."/>
            <person name="Kawasawa Y."/>
            <person name="Kelso J."/>
            <person name="Kitamura H."/>
            <person name="Kitano H."/>
            <person name="Kollias G."/>
            <person name="Krishnan S.P."/>
            <person name="Kruger A."/>
            <person name="Kummerfeld S.K."/>
            <person name="Kurochkin I.V."/>
            <person name="Lareau L.F."/>
            <person name="Lazarevic D."/>
            <person name="Lipovich L."/>
            <person name="Liu J."/>
            <person name="Liuni S."/>
            <person name="McWilliam S."/>
            <person name="Madan Babu M."/>
            <person name="Madera M."/>
            <person name="Marchionni L."/>
            <person name="Matsuda H."/>
            <person name="Matsuzawa S."/>
            <person name="Miki H."/>
            <person name="Mignone F."/>
            <person name="Miyake S."/>
            <person name="Morris K."/>
            <person name="Mottagui-Tabar S."/>
            <person name="Mulder N."/>
            <person name="Nakano N."/>
            <person name="Nakauchi H."/>
            <person name="Ng P."/>
            <person name="Nilsson R."/>
            <person name="Nishiguchi S."/>
            <person name="Nishikawa S."/>
            <person name="Nori F."/>
            <person name="Ohara O."/>
            <person name="Okazaki Y."/>
            <person name="Orlando V."/>
            <person name="Pang K.C."/>
            <person name="Pavan W.J."/>
            <person name="Pavesi G."/>
            <person name="Pesole G."/>
            <person name="Petrovsky N."/>
            <person name="Piazza S."/>
            <person name="Reed J."/>
            <person name="Reid J.F."/>
            <person name="Ring B.Z."/>
            <person name="Ringwald M."/>
            <person name="Rost B."/>
            <person name="Ruan Y."/>
            <person name="Salzberg S.L."/>
            <person name="Sandelin A."/>
            <person name="Schneider C."/>
            <person name="Schoenbach C."/>
            <person name="Sekiguchi K."/>
            <person name="Semple C.A."/>
            <person name="Seno S."/>
            <person name="Sessa L."/>
            <person name="Sheng Y."/>
            <person name="Shibata Y."/>
            <person name="Shimada H."/>
            <person name="Shimada K."/>
            <person name="Silva D."/>
            <person name="Sinclair B."/>
            <person name="Sperling S."/>
            <person name="Stupka E."/>
            <person name="Sugiura K."/>
            <person name="Sultana R."/>
            <person name="Takenaka Y."/>
            <person name="Taki K."/>
            <person name="Tammoja K."/>
            <person name="Tan S.L."/>
            <person name="Tang S."/>
            <person name="Taylor M.S."/>
            <person name="Tegner J."/>
            <person name="Teichmann S.A."/>
            <person name="Ueda H.R."/>
            <person name="van Nimwegen E."/>
            <person name="Verardo R."/>
            <person name="Wei C.L."/>
            <person name="Yagi K."/>
            <person name="Yamanishi H."/>
            <person name="Zabarovsky E."/>
            <person name="Zhu S."/>
            <person name="Zimmer A."/>
            <person name="Hide W."/>
            <person name="Bult C."/>
            <person name="Grimmond S.M."/>
            <person name="Teasdale R.D."/>
            <person name="Liu E.T."/>
            <person name="Brusic V."/>
            <person name="Quackenbush J."/>
            <person name="Wahlestedt C."/>
            <person name="Mattick J.S."/>
            <person name="Hume D.A."/>
            <person name="Kai C."/>
            <person name="Sasaki D."/>
            <person name="Tomaru Y."/>
            <person name="Fukuda S."/>
            <person name="Kanamori-Katayama M."/>
            <person name="Suzuki M."/>
            <person name="Aoki J."/>
            <person name="Arakawa T."/>
            <person name="Iida J."/>
            <person name="Imamura K."/>
            <person name="Itoh M."/>
            <person name="Kato T."/>
            <person name="Kawaji H."/>
            <person name="Kawagashira N."/>
            <person name="Kawashima T."/>
            <person name="Kojima M."/>
            <person name="Kondo S."/>
            <person name="Konno H."/>
            <person name="Nakano K."/>
            <person name="Ninomiya N."/>
            <person name="Nishio T."/>
            <person name="Okada M."/>
            <person name="Plessy C."/>
            <person name="Shibata K."/>
            <person name="Shiraki T."/>
            <person name="Suzuki S."/>
            <person name="Tagami M."/>
            <person name="Waki K."/>
            <person name="Watahiki A."/>
            <person name="Okamura-Oho Y."/>
            <person name="Suzuki H."/>
            <person name="Kawai J."/>
            <person name="Hayashizaki Y."/>
        </authorList>
    </citation>
    <scope>NUCLEOTIDE SEQUENCE [LARGE SCALE MRNA] (ISOFORMS 1; 2 AND 3)</scope>
    <source>
        <strain>C57BL/6J</strain>
        <strain>DBA/2J</strain>
        <tissue>Embryo</tissue>
        <tissue>Placenta</tissue>
    </source>
</reference>
<reference key="2">
    <citation type="journal article" date="2004" name="Genome Res.">
        <title>The status, quality, and expansion of the NIH full-length cDNA project: the Mammalian Gene Collection (MGC).</title>
        <authorList>
            <consortium name="The MGC Project Team"/>
        </authorList>
    </citation>
    <scope>NUCLEOTIDE SEQUENCE [LARGE SCALE MRNA] (ISOFORM 1)</scope>
    <source>
        <strain>FVB/N</strain>
        <tissue>Salivary gland</tissue>
    </source>
</reference>
<reference key="3">
    <citation type="journal article" date="2014" name="J. Leukoc. Biol.">
        <title>Epigenetically modulated LRRC33 acts as a negative physiological regulator for multiple Toll-like receptors.</title>
        <authorList>
            <person name="Su X."/>
            <person name="Mei S."/>
            <person name="Liang X."/>
            <person name="Wang S."/>
            <person name="Liu J."/>
            <person name="Zhang Y."/>
            <person name="Bao Y."/>
            <person name="Chen Y."/>
            <person name="Che Y."/>
            <person name="Chunhua Zhao R."/>
            <person name="Zhang Z."/>
            <person name="Yang R."/>
        </authorList>
    </citation>
    <scope>FUNCTION</scope>
    <scope>DISRUPTION PHENOTYPE</scope>
</reference>
<reference key="4">
    <citation type="journal article" date="2014" name="Nature">
        <title>NRROS negatively regulates reactive oxygen species during host defence and autoimmunity.</title>
        <authorList>
            <person name="Noubade R."/>
            <person name="Wong K."/>
            <person name="Ota N."/>
            <person name="Rutz S."/>
            <person name="Eidenschenk C."/>
            <person name="Valdez P.A."/>
            <person name="Ding J."/>
            <person name="Peng I."/>
            <person name="Sebrell A."/>
            <person name="Caplazi P."/>
            <person name="Devoss J."/>
            <person name="Soriano R.H."/>
            <person name="Sai T."/>
            <person name="Lu R."/>
            <person name="Modrusan Z."/>
            <person name="Hackney J."/>
            <person name="Ouyang W."/>
        </authorList>
    </citation>
    <scope>SUBCELLULAR LOCATION</scope>
    <scope>TISSUE SPECIFICITY</scope>
    <scope>INDUCTION</scope>
    <scope>INTERACTION WITH CYBB</scope>
    <scope>DISRUPTION PHENOTYPE</scope>
</reference>
<reference key="5">
    <citation type="journal article" date="2017" name="Nat. Immunol.">
        <title>Mice deficient in NRROS show abnormal microglial development and neurological disorders.</title>
        <authorList>
            <person name="Wong K."/>
            <person name="Noubade R."/>
            <person name="Manzanillo P."/>
            <person name="Ota N."/>
            <person name="Foreman O."/>
            <person name="Hackney J.A."/>
            <person name="Friedman B.A."/>
            <person name="Pappu R."/>
            <person name="Scearce-Levie K."/>
            <person name="Ouyang W."/>
        </authorList>
    </citation>
    <scope>TISSUE SPECIFICITY</scope>
    <scope>DISRUPTION PHENOTYPE</scope>
</reference>
<reference key="6">
    <citation type="journal article" date="2018" name="Cell">
        <title>A milieu molecule for TGF-beta required for microglia function in the nervous system.</title>
        <authorList>
            <person name="Qin Y."/>
            <person name="Garrison B.S."/>
            <person name="Ma W."/>
            <person name="Wang R."/>
            <person name="Jiang A."/>
            <person name="Li J."/>
            <person name="Mistry M."/>
            <person name="Bronson R.T."/>
            <person name="Santoro D."/>
            <person name="Franco C."/>
            <person name="Robinton D.A."/>
            <person name="Stevens B."/>
            <person name="Rossi D.J."/>
            <person name="Lu C."/>
            <person name="Springer T.A."/>
        </authorList>
    </citation>
    <scope>FUNCTION</scope>
    <scope>SUBCELLULAR LOCATION</scope>
    <scope>INTERACTION WITH TGFB1</scope>
    <scope>DISRUPTION PHENOTYPE</scope>
    <scope>TISSUE SPECIFICITY</scope>
    <scope>DISULFIDE BONDS</scope>
    <scope>GLYCOSYLATION</scope>
    <scope>MUTAGENESIS OF CYS-219 AND CYS-363</scope>
</reference>
<evidence type="ECO:0000250" key="1">
    <source>
        <dbReference type="UniProtKB" id="Q86YC3"/>
    </source>
</evidence>
<evidence type="ECO:0000255" key="2"/>
<evidence type="ECO:0000269" key="3">
    <source>
    </source>
</evidence>
<evidence type="ECO:0000269" key="4">
    <source>
    </source>
</evidence>
<evidence type="ECO:0000269" key="5">
    <source>
    </source>
</evidence>
<evidence type="ECO:0000269" key="6">
    <source>
    </source>
</evidence>
<evidence type="ECO:0000303" key="7">
    <source>
    </source>
</evidence>
<evidence type="ECO:0000303" key="8">
    <source>
    </source>
</evidence>
<evidence type="ECO:0000303" key="9">
    <source>
    </source>
</evidence>
<evidence type="ECO:0000305" key="10"/>
<evidence type="ECO:0000305" key="11">
    <source>
    </source>
</evidence>
<evidence type="ECO:0000305" key="12">
    <source>
    </source>
</evidence>
<evidence type="ECO:0000312" key="13">
    <source>
        <dbReference type="MGI" id="MGI:2445095"/>
    </source>
</evidence>
<gene>
    <name evidence="8 13" type="primary">Nrros</name>
    <name evidence="9 13" type="synonym">Lrrc33</name>
</gene>
<accession>Q8BMT4</accession>
<accession>Q3TIA8</accession>
<accession>Q8BTT4</accession>
<accession>Q8BUI7</accession>
<accession>Q8BY16</accession>
<accession>Q8R063</accession>
<keyword id="KW-0025">Alternative splicing</keyword>
<keyword id="KW-1003">Cell membrane</keyword>
<keyword id="KW-1015">Disulfide bond</keyword>
<keyword id="KW-0256">Endoplasmic reticulum</keyword>
<keyword id="KW-0325">Glycoprotein</keyword>
<keyword id="KW-0340">Growth factor binding</keyword>
<keyword id="KW-0433">Leucine-rich repeat</keyword>
<keyword id="KW-0472">Membrane</keyword>
<keyword id="KW-1185">Reference proteome</keyword>
<keyword id="KW-0677">Repeat</keyword>
<keyword id="KW-0732">Signal</keyword>
<keyword id="KW-0812">Transmembrane</keyword>
<keyword id="KW-1133">Transmembrane helix</keyword>
<dbReference type="EMBL" id="AK028367">
    <property type="protein sequence ID" value="BAC25907.1"/>
    <property type="status" value="ALT_FRAME"/>
    <property type="molecule type" value="mRNA"/>
</dbReference>
<dbReference type="EMBL" id="AK042502">
    <property type="protein sequence ID" value="BAC31275.1"/>
    <property type="status" value="ALT_FRAME"/>
    <property type="molecule type" value="mRNA"/>
</dbReference>
<dbReference type="EMBL" id="AK084858">
    <property type="protein sequence ID" value="BAC39294.1"/>
    <property type="molecule type" value="mRNA"/>
</dbReference>
<dbReference type="EMBL" id="AK088770">
    <property type="protein sequence ID" value="BAC40561.1"/>
    <property type="molecule type" value="mRNA"/>
</dbReference>
<dbReference type="EMBL" id="AK167934">
    <property type="protein sequence ID" value="BAE39938.1"/>
    <property type="molecule type" value="mRNA"/>
</dbReference>
<dbReference type="EMBL" id="BC027411">
    <property type="protein sequence ID" value="AAH27411.1"/>
    <property type="status" value="ALT_INIT"/>
    <property type="molecule type" value="mRNA"/>
</dbReference>
<dbReference type="CCDS" id="CCDS84220.1">
    <molecule id="Q8BMT4-1"/>
</dbReference>
<dbReference type="CCDS" id="CCDS84221.1">
    <molecule id="Q8BMT4-2"/>
</dbReference>
<dbReference type="RefSeq" id="NP_001334110.1">
    <molecule id="Q8BMT4-1"/>
    <property type="nucleotide sequence ID" value="NM_001347181.1"/>
</dbReference>
<dbReference type="RefSeq" id="NP_001334111.1">
    <molecule id="Q8BMT4-2"/>
    <property type="nucleotide sequence ID" value="NM_001347182.1"/>
</dbReference>
<dbReference type="RefSeq" id="NP_666181.2">
    <molecule id="Q8BMT4-1"/>
    <property type="nucleotide sequence ID" value="NM_146069.4"/>
</dbReference>
<dbReference type="RefSeq" id="XP_006522137.1">
    <molecule id="Q8BMT4-1"/>
    <property type="nucleotide sequence ID" value="XM_006522074.4"/>
</dbReference>
<dbReference type="RefSeq" id="XP_006522138.1">
    <molecule id="Q8BMT4-1"/>
    <property type="nucleotide sequence ID" value="XM_006522075.1"/>
</dbReference>
<dbReference type="RefSeq" id="XP_006522139.1">
    <molecule id="Q8BMT4-1"/>
    <property type="nucleotide sequence ID" value="XM_006522076.4"/>
</dbReference>
<dbReference type="RefSeq" id="XP_006522140.1">
    <molecule id="Q8BMT4-1"/>
    <property type="nucleotide sequence ID" value="XM_006522077.4"/>
</dbReference>
<dbReference type="RefSeq" id="XP_017172451.1">
    <molecule id="Q8BMT4-1"/>
    <property type="nucleotide sequence ID" value="XM_017316962.3"/>
</dbReference>
<dbReference type="RefSeq" id="XP_036015789.1">
    <molecule id="Q8BMT4-1"/>
    <property type="nucleotide sequence ID" value="XM_036159896.1"/>
</dbReference>
<dbReference type="SMR" id="Q8BMT4"/>
<dbReference type="DIP" id="DIP-60840N"/>
<dbReference type="FunCoup" id="Q8BMT4">
    <property type="interactions" value="262"/>
</dbReference>
<dbReference type="IntAct" id="Q8BMT4">
    <property type="interactions" value="1"/>
</dbReference>
<dbReference type="STRING" id="10090.ENSMUSP00000110817"/>
<dbReference type="GlyCosmos" id="Q8BMT4">
    <property type="glycosylation" value="11 sites, No reported glycans"/>
</dbReference>
<dbReference type="GlyGen" id="Q8BMT4">
    <property type="glycosylation" value="11 sites, 3 N-linked glycans (3 sites)"/>
</dbReference>
<dbReference type="iPTMnet" id="Q8BMT4"/>
<dbReference type="PhosphoSitePlus" id="Q8BMT4"/>
<dbReference type="PaxDb" id="10090-ENSMUSP00000110817"/>
<dbReference type="PeptideAtlas" id="Q8BMT4"/>
<dbReference type="ProteomicsDB" id="293746">
    <molecule id="Q8BMT4-1"/>
</dbReference>
<dbReference type="ProteomicsDB" id="293747">
    <molecule id="Q8BMT4-2"/>
</dbReference>
<dbReference type="ProteomicsDB" id="293748">
    <molecule id="Q8BMT4-3"/>
</dbReference>
<dbReference type="Antibodypedia" id="33944">
    <property type="antibodies" value="93 antibodies from 17 providers"/>
</dbReference>
<dbReference type="DNASU" id="224109"/>
<dbReference type="Ensembl" id="ENSMUST00000099991.11">
    <molecule id="Q8BMT4-1"/>
    <property type="protein sequence ID" value="ENSMUSP00000097571.5"/>
    <property type="gene ID" value="ENSMUSG00000052384.15"/>
</dbReference>
<dbReference type="Ensembl" id="ENSMUST00000115163.4">
    <molecule id="Q8BMT4-3"/>
    <property type="protein sequence ID" value="ENSMUSP00000110817.4"/>
    <property type="gene ID" value="ENSMUSG00000052384.15"/>
</dbReference>
<dbReference type="Ensembl" id="ENSMUST00000115165.10">
    <molecule id="Q8BMT4-2"/>
    <property type="protein sequence ID" value="ENSMUSP00000110819.4"/>
    <property type="gene ID" value="ENSMUSG00000052384.15"/>
</dbReference>
<dbReference type="Ensembl" id="ENSMUST00000126869.2">
    <molecule id="Q8BMT4-1"/>
    <property type="protein sequence ID" value="ENSMUSP00000116388.2"/>
    <property type="gene ID" value="ENSMUSG00000052384.15"/>
</dbReference>
<dbReference type="Ensembl" id="ENSMUST00000143682.8">
    <molecule id="Q8BMT4-1"/>
    <property type="protein sequence ID" value="ENSMUSP00000119349.2"/>
    <property type="gene ID" value="ENSMUSG00000052384.15"/>
</dbReference>
<dbReference type="GeneID" id="224109"/>
<dbReference type="KEGG" id="mmu:224109"/>
<dbReference type="UCSC" id="uc007yyg.1">
    <molecule id="Q8BMT4-1"/>
    <property type="organism name" value="mouse"/>
</dbReference>
<dbReference type="UCSC" id="uc007yyh.1">
    <molecule id="Q8BMT4-3"/>
    <property type="organism name" value="mouse"/>
</dbReference>
<dbReference type="UCSC" id="uc007yyi.1">
    <molecule id="Q8BMT4-2"/>
    <property type="organism name" value="mouse"/>
</dbReference>
<dbReference type="AGR" id="MGI:2445095"/>
<dbReference type="CTD" id="375387"/>
<dbReference type="MGI" id="MGI:2445095">
    <property type="gene designation" value="Nrros"/>
</dbReference>
<dbReference type="VEuPathDB" id="HostDB:ENSMUSG00000052384"/>
<dbReference type="eggNOG" id="KOG0619">
    <property type="taxonomic scope" value="Eukaryota"/>
</dbReference>
<dbReference type="GeneTree" id="ENSGT00940000157975"/>
<dbReference type="HOGENOM" id="CLU_024194_0_0_1"/>
<dbReference type="InParanoid" id="Q8BMT4"/>
<dbReference type="OMA" id="DWAMVTC"/>
<dbReference type="OrthoDB" id="56658at9989"/>
<dbReference type="PhylomeDB" id="Q8BMT4"/>
<dbReference type="TreeFam" id="TF317167"/>
<dbReference type="BioGRID-ORCS" id="224109">
    <property type="hits" value="2 hits in 28 CRISPR screens"/>
</dbReference>
<dbReference type="ChiTaRS" id="Nrros">
    <property type="organism name" value="mouse"/>
</dbReference>
<dbReference type="PRO" id="PR:Q8BMT4"/>
<dbReference type="Proteomes" id="UP000000589">
    <property type="component" value="Chromosome 16"/>
</dbReference>
<dbReference type="RNAct" id="Q8BMT4">
    <property type="molecule type" value="protein"/>
</dbReference>
<dbReference type="Bgee" id="ENSMUSG00000052384">
    <property type="expression patterns" value="Expressed in stroma of bone marrow and 115 other cell types or tissues"/>
</dbReference>
<dbReference type="ExpressionAtlas" id="Q8BMT4">
    <property type="expression patterns" value="baseline and differential"/>
</dbReference>
<dbReference type="GO" id="GO:0009986">
    <property type="term" value="C:cell surface"/>
    <property type="evidence" value="ECO:0000314"/>
    <property type="project" value="UniProtKB"/>
</dbReference>
<dbReference type="GO" id="GO:0005783">
    <property type="term" value="C:endoplasmic reticulum"/>
    <property type="evidence" value="ECO:0000314"/>
    <property type="project" value="UniProtKB"/>
</dbReference>
<dbReference type="GO" id="GO:0005789">
    <property type="term" value="C:endoplasmic reticulum membrane"/>
    <property type="evidence" value="ECO:0007669"/>
    <property type="project" value="UniProtKB-SubCell"/>
</dbReference>
<dbReference type="GO" id="GO:0005576">
    <property type="term" value="C:extracellular region"/>
    <property type="evidence" value="ECO:0007669"/>
    <property type="project" value="GOC"/>
</dbReference>
<dbReference type="GO" id="GO:0005886">
    <property type="term" value="C:plasma membrane"/>
    <property type="evidence" value="ECO:0007669"/>
    <property type="project" value="UniProtKB-SubCell"/>
</dbReference>
<dbReference type="GO" id="GO:0141069">
    <property type="term" value="F:receptor ligand inhibitor activity"/>
    <property type="evidence" value="ECO:0000314"/>
    <property type="project" value="UniProtKB"/>
</dbReference>
<dbReference type="GO" id="GO:0050431">
    <property type="term" value="F:transforming growth factor beta binding"/>
    <property type="evidence" value="ECO:0000353"/>
    <property type="project" value="UniProtKB"/>
</dbReference>
<dbReference type="GO" id="GO:0036503">
    <property type="term" value="P:ERAD pathway"/>
    <property type="evidence" value="ECO:0000304"/>
    <property type="project" value="UniProtKB"/>
</dbReference>
<dbReference type="GO" id="GO:0006955">
    <property type="term" value="P:immune response"/>
    <property type="evidence" value="ECO:0000315"/>
    <property type="project" value="UniProtKB"/>
</dbReference>
<dbReference type="GO" id="GO:0006954">
    <property type="term" value="P:inflammatory response"/>
    <property type="evidence" value="ECO:0000315"/>
    <property type="project" value="UniProtKB"/>
</dbReference>
<dbReference type="GO" id="GO:0014005">
    <property type="term" value="P:microglia development"/>
    <property type="evidence" value="ECO:0000315"/>
    <property type="project" value="UniProtKB"/>
</dbReference>
<dbReference type="GO" id="GO:0035583">
    <property type="term" value="P:sequestering of TGFbeta in extracellular matrix"/>
    <property type="evidence" value="ECO:0000314"/>
    <property type="project" value="UniProtKB"/>
</dbReference>
<dbReference type="GO" id="GO:0006801">
    <property type="term" value="P:superoxide metabolic process"/>
    <property type="evidence" value="ECO:0000315"/>
    <property type="project" value="UniProtKB"/>
</dbReference>
<dbReference type="GO" id="GO:0007179">
    <property type="term" value="P:transforming growth factor beta receptor signaling pathway"/>
    <property type="evidence" value="ECO:0000314"/>
    <property type="project" value="UniProtKB"/>
</dbReference>
<dbReference type="FunFam" id="3.80.10.10:FF:000776">
    <property type="entry name" value="Transforming growth factor beta activator LRRC33"/>
    <property type="match status" value="1"/>
</dbReference>
<dbReference type="FunFam" id="3.80.10.10:FF:000806">
    <property type="entry name" value="Transforming growth factor beta activator LRRC33"/>
    <property type="match status" value="1"/>
</dbReference>
<dbReference type="FunFam" id="3.80.10.10:FF:000913">
    <property type="entry name" value="Transforming growth factor beta activator LRRC33"/>
    <property type="match status" value="1"/>
</dbReference>
<dbReference type="Gene3D" id="3.80.10.10">
    <property type="entry name" value="Ribonuclease Inhibitor"/>
    <property type="match status" value="3"/>
</dbReference>
<dbReference type="InterPro" id="IPR001611">
    <property type="entry name" value="Leu-rich_rpt"/>
</dbReference>
<dbReference type="InterPro" id="IPR003591">
    <property type="entry name" value="Leu-rich_rpt_typical-subtyp"/>
</dbReference>
<dbReference type="InterPro" id="IPR032675">
    <property type="entry name" value="LRR_dom_sf"/>
</dbReference>
<dbReference type="InterPro" id="IPR050333">
    <property type="entry name" value="SLRP"/>
</dbReference>
<dbReference type="PANTHER" id="PTHR45712">
    <property type="entry name" value="AGAP008170-PA"/>
    <property type="match status" value="1"/>
</dbReference>
<dbReference type="PANTHER" id="PTHR45712:SF22">
    <property type="entry name" value="INSULIN-LIKE GROWTH FACTOR-BINDING PROTEIN COMPLEX ACID LABILE SUBUNIT"/>
    <property type="match status" value="1"/>
</dbReference>
<dbReference type="Pfam" id="PF13855">
    <property type="entry name" value="LRR_8"/>
    <property type="match status" value="3"/>
</dbReference>
<dbReference type="PRINTS" id="PR00019">
    <property type="entry name" value="LEURICHRPT"/>
</dbReference>
<dbReference type="SMART" id="SM00364">
    <property type="entry name" value="LRR_BAC"/>
    <property type="match status" value="4"/>
</dbReference>
<dbReference type="SMART" id="SM00369">
    <property type="entry name" value="LRR_TYP"/>
    <property type="match status" value="11"/>
</dbReference>
<dbReference type="SUPFAM" id="SSF52058">
    <property type="entry name" value="L domain-like"/>
    <property type="match status" value="3"/>
</dbReference>
<dbReference type="PROSITE" id="PS51450">
    <property type="entry name" value="LRR"/>
    <property type="match status" value="17"/>
</dbReference>
<comment type="function">
    <text evidence="6 11 12">Key regulator of transforming growth factor beta-1 (TGFB1) specifically required for microglia function in the nervous system (PubMed:29909984). Required for activation of latent TGF-beta-1 in macrophages and microglia: associates specifically via disulfide bonds with the Latency-associated peptide (LAP), which is the regulatory chain of TGFB1, and regulates integrin-dependent activation of TGF-beta-1 (PubMed:29909984). TGF-beta-1 activation mediated by LRRC33/NRROS is highly localized: there is little spreading of TGF-beta-1 activated from one microglial cell to neighboring microglia, suggesting the existence of localized and selective activation of TGF-beta-1 by LRRC33/NRROS (PubMed:29909984). Indirectly plays a role in Toll-like receptor (TLR) signaling: ability to inhibit TLR-mediated NF-kappa-B activation and cytokine production is probably a consequence of its role in TGF-beta-1 signaling (Probable).</text>
</comment>
<comment type="subunit">
    <text evidence="1 4 6">Interacts with TGFB1; associates via disulfide bonds with the Latency-associated peptide chain (LAP) regulatory chain of TGFB1, leading to regulate activation of TGF-beta-1 (PubMed:29909984). Interacts (via LRR repeats) with TLR2, TLR3, TLR4, TLR9 and probably other Toll-like receptors (By similarity). Interacts with CYBB/NOX2; the interaction is direct (PubMed:24739962).</text>
</comment>
<comment type="interaction">
    <interactant intactId="EBI-16102695">
        <id>Q8BMT4</id>
    </interactant>
    <interactant intactId="EBI-6654585">
        <id>Q61093</id>
        <label>Cybb</label>
    </interactant>
    <organismsDiffer>false</organismsDiffer>
    <experiments>4</experiments>
</comment>
<comment type="subcellular location">
    <subcellularLocation>
        <location evidence="4 6">Cell membrane</location>
        <topology evidence="2">Single-pass type I membrane protein</topology>
    </subcellularLocation>
    <subcellularLocation>
        <location evidence="4">Endoplasmic reticulum membrane</location>
        <topology evidence="2">Single-pass type I membrane protein</topology>
    </subcellularLocation>
</comment>
<comment type="alternative products">
    <event type="alternative splicing"/>
    <isoform>
        <id>Q8BMT4-1</id>
        <name>1</name>
        <sequence type="displayed"/>
    </isoform>
    <isoform>
        <id>Q8BMT4-2</id>
        <name>2</name>
        <sequence type="described" ref="VSP_016019"/>
    </isoform>
    <isoform>
        <id>Q8BMT4-3</id>
        <name>3</name>
        <sequence type="described" ref="VSP_016020"/>
    </isoform>
</comment>
<comment type="tissue specificity">
    <text evidence="4 5 6">Mainly expressed in cells of hematopoietic origin, such as in immune organs such as lymph nodes, thymus and spleen (PubMed:24739962, PubMed:29909984). Among leukocytes, expressed at higher level in myeloid cell such as macrophages, neutrophils and dendritic cells (PubMed:24739962). Highly expressed in central nervous system-resident macrophages, including microglia and perivascular macrophages (PubMed:28459434, PubMed:29909984).</text>
</comment>
<comment type="induction">
    <text evidence="4">Down-regulated by IFN-gamma (IFNG), LPS or TNF-alpha in bone marrow-derived macrophages (BMDMs).</text>
</comment>
<comment type="PTM">
    <text evidence="6">N-glycosylated.</text>
</comment>
<comment type="disruption phenotype">
    <text evidence="3 4 5 6">Mice develop paraparesis and neurodegeneration and display reactive microglia caused by defects in TGF-beta-1 signaling (PubMed:29909984). Mice are viable at six-weeks of age and immune organs and leukocyte subsets are not affected (PubMed:24739962). However, significantly increased reactive oxygen species (ROS) production is observed in primary bone marrow-derived macrophages (BMDMs) upon zymosan stimulation (PubMed:24739962). Mice are more susceptible to Toll-like receptor (TLR) ligand challenges: the macrophages and dendritic cells produce more pro-inflammatory cytokines through increased activation of MAPK and NF-kappa-B (PubMed:24550525). By two months of age, mice begin to display neurological symptoms including defects in motor control and strength and die before six months of age (PubMed:28459434, PubMed:29909984). Mice show microglial development defects (PubMed:28459434, PubMed:29909984). Mice develop progressive paraparesis associated with loss of myelin and axons in the spinal cord and brainstem (PubMed:29909984).</text>
</comment>
<comment type="similarity">
    <text evidence="10">Belongs to the LRRC32/LRRC33 family.</text>
</comment>
<comment type="caution">
    <text evidence="4 6">Was initially thought to act as a negative regulator of reactive oxygen species (ROS) that limits ROS production by phagocytes during inflammatory response, thereby playing a role during host defense (PubMed:24739962). However, these results were based on indirect evidences and could not be confirmed by another group (PubMed:29909984). It was later shown to act as a key regulator of transforming growth factor beta-1 (TGFB1) (PubMed:29909984).</text>
</comment>
<comment type="sequence caution" evidence="10">
    <conflict type="erroneous initiation">
        <sequence resource="EMBL-CDS" id="AAH27411"/>
    </conflict>
    <text>Truncated N-terminus.</text>
</comment>
<comment type="sequence caution" evidence="10">
    <conflict type="frameshift">
        <sequence resource="EMBL-CDS" id="BAC25907"/>
    </conflict>
</comment>
<comment type="sequence caution" evidence="10">
    <conflict type="frameshift">
        <sequence resource="EMBL-CDS" id="BAC31275"/>
    </conflict>
</comment>
<proteinExistence type="evidence at protein level"/>